<keyword id="KW-0997">Cell inner membrane</keyword>
<keyword id="KW-1003">Cell membrane</keyword>
<keyword id="KW-0472">Membrane</keyword>
<keyword id="KW-1185">Reference proteome</keyword>
<keyword id="KW-0812">Transmembrane</keyword>
<keyword id="KW-1133">Transmembrane helix</keyword>
<feature type="chain" id="PRO_0000169499" description="Inner membrane protein YhdU">
    <location>
        <begin position="1"/>
        <end position="59"/>
    </location>
</feature>
<feature type="transmembrane region" description="Helical" evidence="1">
    <location>
        <begin position="6"/>
        <end position="26"/>
    </location>
</feature>
<dbReference type="EMBL" id="U18997">
    <property type="protein sequence ID" value="AAA58067.1"/>
    <property type="molecule type" value="Genomic_DNA"/>
</dbReference>
<dbReference type="EMBL" id="U00096">
    <property type="protein sequence ID" value="AAC76295.1"/>
    <property type="molecule type" value="Genomic_DNA"/>
</dbReference>
<dbReference type="EMBL" id="AP009048">
    <property type="protein sequence ID" value="BAE77304.1"/>
    <property type="molecule type" value="Genomic_DNA"/>
</dbReference>
<dbReference type="PIR" id="A65119">
    <property type="entry name" value="A65119"/>
</dbReference>
<dbReference type="RefSeq" id="NP_417729.1">
    <property type="nucleotide sequence ID" value="NC_000913.3"/>
</dbReference>
<dbReference type="RefSeq" id="WP_001295275.1">
    <property type="nucleotide sequence ID" value="NZ_STEB01000012.1"/>
</dbReference>
<dbReference type="SMR" id="P64619"/>
<dbReference type="BioGRID" id="4262452">
    <property type="interactions" value="36"/>
</dbReference>
<dbReference type="FunCoup" id="P64619">
    <property type="interactions" value="71"/>
</dbReference>
<dbReference type="STRING" id="511145.b3263"/>
<dbReference type="PaxDb" id="511145-b3263"/>
<dbReference type="EnsemblBacteria" id="AAC76295">
    <property type="protein sequence ID" value="AAC76295"/>
    <property type="gene ID" value="b3263"/>
</dbReference>
<dbReference type="GeneID" id="947700"/>
<dbReference type="KEGG" id="ecj:JW3231"/>
<dbReference type="KEGG" id="eco:b3263"/>
<dbReference type="KEGG" id="ecoc:C3026_17750"/>
<dbReference type="PATRIC" id="fig|511145.12.peg.3362"/>
<dbReference type="EchoBASE" id="EB2681"/>
<dbReference type="eggNOG" id="ENOG50331MQ">
    <property type="taxonomic scope" value="Bacteria"/>
</dbReference>
<dbReference type="HOGENOM" id="CLU_2914126_0_0_6"/>
<dbReference type="InParanoid" id="P64619"/>
<dbReference type="OMA" id="QWIELMS"/>
<dbReference type="OrthoDB" id="6571029at2"/>
<dbReference type="PhylomeDB" id="P64619"/>
<dbReference type="BioCyc" id="EcoCyc:G7694-MONOMER"/>
<dbReference type="PRO" id="PR:P64619"/>
<dbReference type="Proteomes" id="UP000000625">
    <property type="component" value="Chromosome"/>
</dbReference>
<dbReference type="GO" id="GO:0005886">
    <property type="term" value="C:plasma membrane"/>
    <property type="evidence" value="ECO:0007669"/>
    <property type="project" value="UniProtKB-SubCell"/>
</dbReference>
<dbReference type="InterPro" id="IPR022540">
    <property type="entry name" value="DUF2556"/>
</dbReference>
<dbReference type="Pfam" id="PF10831">
    <property type="entry name" value="DUF2556"/>
    <property type="match status" value="1"/>
</dbReference>
<reference key="1">
    <citation type="journal article" date="1997" name="Science">
        <title>The complete genome sequence of Escherichia coli K-12.</title>
        <authorList>
            <person name="Blattner F.R."/>
            <person name="Plunkett G. III"/>
            <person name="Bloch C.A."/>
            <person name="Perna N.T."/>
            <person name="Burland V."/>
            <person name="Riley M."/>
            <person name="Collado-Vides J."/>
            <person name="Glasner J.D."/>
            <person name="Rode C.K."/>
            <person name="Mayhew G.F."/>
            <person name="Gregor J."/>
            <person name="Davis N.W."/>
            <person name="Kirkpatrick H.A."/>
            <person name="Goeden M.A."/>
            <person name="Rose D.J."/>
            <person name="Mau B."/>
            <person name="Shao Y."/>
        </authorList>
    </citation>
    <scope>NUCLEOTIDE SEQUENCE [LARGE SCALE GENOMIC DNA]</scope>
    <source>
        <strain>K12 / MG1655 / ATCC 47076</strain>
    </source>
</reference>
<reference key="2">
    <citation type="journal article" date="2006" name="Mol. Syst. Biol.">
        <title>Highly accurate genome sequences of Escherichia coli K-12 strains MG1655 and W3110.</title>
        <authorList>
            <person name="Hayashi K."/>
            <person name="Morooka N."/>
            <person name="Yamamoto Y."/>
            <person name="Fujita K."/>
            <person name="Isono K."/>
            <person name="Choi S."/>
            <person name="Ohtsubo E."/>
            <person name="Baba T."/>
            <person name="Wanner B.L."/>
            <person name="Mori H."/>
            <person name="Horiuchi T."/>
        </authorList>
    </citation>
    <scope>NUCLEOTIDE SEQUENCE [LARGE SCALE GENOMIC DNA]</scope>
    <source>
        <strain>K12 / W3110 / ATCC 27325 / DSM 5911</strain>
    </source>
</reference>
<protein>
    <recommendedName>
        <fullName>Inner membrane protein YhdU</fullName>
    </recommendedName>
</protein>
<accession>P64619</accession>
<accession>P45764</accession>
<accession>Q2M8V2</accession>
<sequence length="59" mass="7204">MIRKYWWLVVFAVFVFLFDTLLMQWIELLATETDKCRNMNSVNPLKLVNCDELNFQDRM</sequence>
<comment type="subcellular location">
    <subcellularLocation>
        <location evidence="2">Cell inner membrane</location>
        <topology evidence="2">Single-pass membrane protein</topology>
    </subcellularLocation>
</comment>
<proteinExistence type="predicted"/>
<name>YHDU_ECOLI</name>
<gene>
    <name type="primary">yhdU</name>
    <name type="ordered locus">b3263</name>
    <name type="ordered locus">JW3231</name>
</gene>
<organism>
    <name type="scientific">Escherichia coli (strain K12)</name>
    <dbReference type="NCBI Taxonomy" id="83333"/>
    <lineage>
        <taxon>Bacteria</taxon>
        <taxon>Pseudomonadati</taxon>
        <taxon>Pseudomonadota</taxon>
        <taxon>Gammaproteobacteria</taxon>
        <taxon>Enterobacterales</taxon>
        <taxon>Enterobacteriaceae</taxon>
        <taxon>Escherichia</taxon>
    </lineage>
</organism>
<evidence type="ECO:0000255" key="1"/>
<evidence type="ECO:0000305" key="2"/>